<evidence type="ECO:0000269" key="1">
    <source>
    </source>
</evidence>
<evidence type="ECO:0000269" key="2">
    <source>
    </source>
</evidence>
<evidence type="ECO:0000269" key="3">
    <source>
    </source>
</evidence>
<evidence type="ECO:0000269" key="4">
    <source>
    </source>
</evidence>
<evidence type="ECO:0000269" key="5">
    <source>
    </source>
</evidence>
<evidence type="ECO:0000269" key="6">
    <source>
    </source>
</evidence>
<evidence type="ECO:0000305" key="7"/>
<evidence type="ECO:0007829" key="8">
    <source>
        <dbReference type="PDB" id="1MUG"/>
    </source>
</evidence>
<evidence type="ECO:0007829" key="9">
    <source>
        <dbReference type="PDB" id="1MWJ"/>
    </source>
</evidence>
<comment type="function">
    <text evidence="3 4">Excises ethenocytosine and uracil, which can arise by alkylation or deamination of cytosine, respectively, from the corresponding mispairs with guanine in ds-DNA. It is capable of hydrolyzing the carbon-nitrogen bond between the sugar-phosphate backbone of the DNA and the mispaired base. The complementary strand guanine functions in substrate recognition. Required for DNA damage lesion repair in stationary-phase cells.</text>
</comment>
<comment type="catalytic activity">
    <reaction>
        <text>Specifically hydrolyzes mismatched double-stranded DNA and polynucleotides, releasing free uracil.</text>
        <dbReference type="EC" id="3.2.2.28"/>
    </reaction>
</comment>
<comment type="activity regulation">
    <text>Subject to strong product inhibition. N-glycosyl hydrolysis proceeds 100-fold faster than product release.</text>
</comment>
<comment type="subunit">
    <text evidence="1 5 6">Binds DNA as a monomer.</text>
</comment>
<comment type="subcellular location">
    <subcellularLocation>
        <location evidence="7">Cytoplasm</location>
    </subcellularLocation>
</comment>
<comment type="induction">
    <text evidence="2">Induced in stationary phase.</text>
</comment>
<comment type="similarity">
    <text evidence="7">Belongs to the uracil-DNA glycosylase (UDG) superfamily. TDG/mug family.</text>
</comment>
<gene>
    <name type="primary">mug</name>
    <name type="synonym">ygjF</name>
    <name type="ordered locus">b3068</name>
    <name type="ordered locus">JW3040</name>
</gene>
<organism>
    <name type="scientific">Escherichia coli (strain K12)</name>
    <dbReference type="NCBI Taxonomy" id="83333"/>
    <lineage>
        <taxon>Bacteria</taxon>
        <taxon>Pseudomonadati</taxon>
        <taxon>Pseudomonadota</taxon>
        <taxon>Gammaproteobacteria</taxon>
        <taxon>Enterobacterales</taxon>
        <taxon>Enterobacteriaceae</taxon>
        <taxon>Escherichia</taxon>
    </lineage>
</organism>
<feature type="chain" id="PRO_0000185774" description="G/U mismatch-specific DNA glycosylase">
    <location>
        <begin position="1"/>
        <end position="168"/>
    </location>
</feature>
<feature type="strand" evidence="8">
    <location>
        <begin position="11"/>
        <end position="18"/>
    </location>
</feature>
<feature type="helix" evidence="8">
    <location>
        <begin position="21"/>
        <end position="26"/>
    </location>
</feature>
<feature type="helix" evidence="8">
    <location>
        <begin position="37"/>
        <end position="43"/>
    </location>
</feature>
<feature type="strand" evidence="8">
    <location>
        <begin position="46"/>
        <end position="49"/>
    </location>
</feature>
<feature type="helix" evidence="8">
    <location>
        <begin position="53"/>
        <end position="62"/>
    </location>
</feature>
<feature type="strand" evidence="8">
    <location>
        <begin position="64"/>
        <end position="69"/>
    </location>
</feature>
<feature type="strand" evidence="9">
    <location>
        <begin position="74"/>
        <end position="76"/>
    </location>
</feature>
<feature type="helix" evidence="8">
    <location>
        <begin position="77"/>
        <end position="79"/>
    </location>
</feature>
<feature type="helix" evidence="8">
    <location>
        <begin position="82"/>
        <end position="99"/>
    </location>
</feature>
<feature type="strand" evidence="8">
    <location>
        <begin position="102"/>
        <end position="107"/>
    </location>
</feature>
<feature type="helix" evidence="8">
    <location>
        <begin position="109"/>
        <end position="116"/>
    </location>
</feature>
<feature type="strand" evidence="8">
    <location>
        <begin position="123"/>
        <end position="130"/>
    </location>
</feature>
<feature type="strand" evidence="8">
    <location>
        <begin position="133"/>
        <end position="138"/>
    </location>
</feature>
<feature type="helix" evidence="8">
    <location>
        <begin position="149"/>
        <end position="162"/>
    </location>
</feature>
<accession>P0A9H1</accession>
<accession>P43342</accession>
<accession>Q2M9D7</accession>
<sequence length="168" mass="18673">MVEDILAPGLRVVFCGINPGLSSAGTGFPFAHPANRFWKVIYQAGFTDRQLKPQEAQHLLDYRCGVTKLVDRPTVQANEVSKQELHAGGRKLIEKIEDYQPQALAILGKQAYEQGFSQRGAQWGKQTLTIGSTQIWVLPNPSGLSRVSLEKLVEAYRELDQALVVRGR</sequence>
<name>MUG_ECOLI</name>
<keyword id="KW-0002">3D-structure</keyword>
<keyword id="KW-0963">Cytoplasm</keyword>
<keyword id="KW-0227">DNA damage</keyword>
<keyword id="KW-0228">DNA excision</keyword>
<keyword id="KW-0234">DNA repair</keyword>
<keyword id="KW-0238">DNA-binding</keyword>
<keyword id="KW-0378">Hydrolase</keyword>
<keyword id="KW-1185">Reference proteome</keyword>
<dbReference type="EC" id="3.2.2.28"/>
<dbReference type="EMBL" id="U28379">
    <property type="protein sequence ID" value="AAA89148.1"/>
    <property type="molecule type" value="Genomic_DNA"/>
</dbReference>
<dbReference type="EMBL" id="U00096">
    <property type="protein sequence ID" value="AAC76104.1"/>
    <property type="molecule type" value="Genomic_DNA"/>
</dbReference>
<dbReference type="EMBL" id="AP009048">
    <property type="protein sequence ID" value="BAE77119.1"/>
    <property type="molecule type" value="Genomic_DNA"/>
</dbReference>
<dbReference type="EMBL" id="J01687">
    <property type="status" value="NOT_ANNOTATED_CDS"/>
    <property type="molecule type" value="Genomic_DNA"/>
</dbReference>
<dbReference type="PIR" id="B65095">
    <property type="entry name" value="B65095"/>
</dbReference>
<dbReference type="RefSeq" id="NP_417540.1">
    <property type="nucleotide sequence ID" value="NC_000913.3"/>
</dbReference>
<dbReference type="RefSeq" id="WP_000228937.1">
    <property type="nucleotide sequence ID" value="NZ_STEB01000001.1"/>
</dbReference>
<dbReference type="PDB" id="1MTL">
    <property type="method" value="X-ray"/>
    <property type="resolution" value="2.80 A"/>
    <property type="chains" value="A/B=1-168"/>
</dbReference>
<dbReference type="PDB" id="1MUG">
    <property type="method" value="X-ray"/>
    <property type="resolution" value="1.80 A"/>
    <property type="chains" value="A=1-168"/>
</dbReference>
<dbReference type="PDB" id="1MWI">
    <property type="method" value="X-ray"/>
    <property type="resolution" value="2.35 A"/>
    <property type="chains" value="A=1-168"/>
</dbReference>
<dbReference type="PDB" id="1MWJ">
    <property type="method" value="X-ray"/>
    <property type="resolution" value="2.85 A"/>
    <property type="chains" value="A=1-168"/>
</dbReference>
<dbReference type="PDBsum" id="1MTL"/>
<dbReference type="PDBsum" id="1MUG"/>
<dbReference type="PDBsum" id="1MWI"/>
<dbReference type="PDBsum" id="1MWJ"/>
<dbReference type="SMR" id="P0A9H1"/>
<dbReference type="BioGRID" id="4262387">
    <property type="interactions" value="179"/>
</dbReference>
<dbReference type="FunCoup" id="P0A9H1">
    <property type="interactions" value="57"/>
</dbReference>
<dbReference type="IntAct" id="P0A9H1">
    <property type="interactions" value="21"/>
</dbReference>
<dbReference type="STRING" id="511145.b3068"/>
<dbReference type="jPOST" id="P0A9H1"/>
<dbReference type="PaxDb" id="511145-b3068"/>
<dbReference type="EnsemblBacteria" id="AAC76104">
    <property type="protein sequence ID" value="AAC76104"/>
    <property type="gene ID" value="b3068"/>
</dbReference>
<dbReference type="GeneID" id="93778924"/>
<dbReference type="GeneID" id="947560"/>
<dbReference type="KEGG" id="ecj:JW3040"/>
<dbReference type="KEGG" id="eco:b3068"/>
<dbReference type="KEGG" id="ecoc:C3026_16760"/>
<dbReference type="PATRIC" id="fig|1411691.4.peg.3661"/>
<dbReference type="EchoBASE" id="EB2576"/>
<dbReference type="eggNOG" id="COG3663">
    <property type="taxonomic scope" value="Bacteria"/>
</dbReference>
<dbReference type="HOGENOM" id="CLU_042829_3_1_6"/>
<dbReference type="InParanoid" id="P0A9H1"/>
<dbReference type="OMA" id="FWPVLHL"/>
<dbReference type="OrthoDB" id="9799921at2"/>
<dbReference type="PhylomeDB" id="P0A9H1"/>
<dbReference type="BioCyc" id="EcoCyc:EG12717-MONOMER"/>
<dbReference type="BioCyc" id="MetaCyc:EG12717-MONOMER"/>
<dbReference type="BRENDA" id="3.2.2.28">
    <property type="organism ID" value="2026"/>
</dbReference>
<dbReference type="EvolutionaryTrace" id="P0A9H1"/>
<dbReference type="PRO" id="PR:P0A9H1"/>
<dbReference type="Proteomes" id="UP000000625">
    <property type="component" value="Chromosome"/>
</dbReference>
<dbReference type="GO" id="GO:0005737">
    <property type="term" value="C:cytoplasm"/>
    <property type="evidence" value="ECO:0007669"/>
    <property type="project" value="UniProtKB-SubCell"/>
</dbReference>
<dbReference type="GO" id="GO:0003677">
    <property type="term" value="F:DNA binding"/>
    <property type="evidence" value="ECO:0007669"/>
    <property type="project" value="UniProtKB-KW"/>
</dbReference>
<dbReference type="GO" id="GO:0008263">
    <property type="term" value="F:pyrimidine-specific mismatch base pair DNA N-glycosylase activity"/>
    <property type="evidence" value="ECO:0000314"/>
    <property type="project" value="EcoCyc"/>
</dbReference>
<dbReference type="GO" id="GO:0004844">
    <property type="term" value="F:uracil DNA N-glycosylase activity"/>
    <property type="evidence" value="ECO:0000318"/>
    <property type="project" value="GO_Central"/>
</dbReference>
<dbReference type="GO" id="GO:0006285">
    <property type="term" value="P:base-excision repair, AP site formation"/>
    <property type="evidence" value="ECO:0000314"/>
    <property type="project" value="EcoCyc"/>
</dbReference>
<dbReference type="CDD" id="cd10028">
    <property type="entry name" value="UDG-F2_TDG_MUG"/>
    <property type="match status" value="1"/>
</dbReference>
<dbReference type="FunFam" id="3.40.470.10:FF:000003">
    <property type="entry name" value="G/U mismatch-specific DNA glycosylase"/>
    <property type="match status" value="1"/>
</dbReference>
<dbReference type="Gene3D" id="3.40.470.10">
    <property type="entry name" value="Uracil-DNA glycosylase-like domain"/>
    <property type="match status" value="1"/>
</dbReference>
<dbReference type="HAMAP" id="MF_01956">
    <property type="entry name" value="MUG"/>
    <property type="match status" value="1"/>
</dbReference>
<dbReference type="InterPro" id="IPR015637">
    <property type="entry name" value="MUG/TDG"/>
</dbReference>
<dbReference type="InterPro" id="IPR023502">
    <property type="entry name" value="MUG_bact"/>
</dbReference>
<dbReference type="InterPro" id="IPR005122">
    <property type="entry name" value="Uracil-DNA_glycosylase-like"/>
</dbReference>
<dbReference type="InterPro" id="IPR036895">
    <property type="entry name" value="Uracil-DNA_glycosylase-like_sf"/>
</dbReference>
<dbReference type="NCBIfam" id="NF007570">
    <property type="entry name" value="PRK10201.1"/>
    <property type="match status" value="1"/>
</dbReference>
<dbReference type="PANTHER" id="PTHR12159">
    <property type="entry name" value="G/T AND G/U MISMATCH-SPECIFIC DNA GLYCOSYLASE"/>
    <property type="match status" value="1"/>
</dbReference>
<dbReference type="PANTHER" id="PTHR12159:SF9">
    <property type="entry name" value="G_T MISMATCH-SPECIFIC THYMINE DNA GLYCOSYLASE"/>
    <property type="match status" value="1"/>
</dbReference>
<dbReference type="Pfam" id="PF03167">
    <property type="entry name" value="UDG"/>
    <property type="match status" value="1"/>
</dbReference>
<dbReference type="SUPFAM" id="SSF52141">
    <property type="entry name" value="Uracil-DNA glycosylase-like"/>
    <property type="match status" value="1"/>
</dbReference>
<proteinExistence type="evidence at protein level"/>
<reference key="1">
    <citation type="journal article" date="1997" name="Science">
        <title>The complete genome sequence of Escherichia coli K-12.</title>
        <authorList>
            <person name="Blattner F.R."/>
            <person name="Plunkett G. III"/>
            <person name="Bloch C.A."/>
            <person name="Perna N.T."/>
            <person name="Burland V."/>
            <person name="Riley M."/>
            <person name="Collado-Vides J."/>
            <person name="Glasner J.D."/>
            <person name="Rode C.K."/>
            <person name="Mayhew G.F."/>
            <person name="Gregor J."/>
            <person name="Davis N.W."/>
            <person name="Kirkpatrick H.A."/>
            <person name="Goeden M.A."/>
            <person name="Rose D.J."/>
            <person name="Mau B."/>
            <person name="Shao Y."/>
        </authorList>
    </citation>
    <scope>NUCLEOTIDE SEQUENCE [LARGE SCALE GENOMIC DNA]</scope>
    <source>
        <strain>K12 / MG1655 / ATCC 47076</strain>
    </source>
</reference>
<reference key="2">
    <citation type="journal article" date="2006" name="Mol. Syst. Biol.">
        <title>Highly accurate genome sequences of Escherichia coli K-12 strains MG1655 and W3110.</title>
        <authorList>
            <person name="Hayashi K."/>
            <person name="Morooka N."/>
            <person name="Yamamoto Y."/>
            <person name="Fujita K."/>
            <person name="Isono K."/>
            <person name="Choi S."/>
            <person name="Ohtsubo E."/>
            <person name="Baba T."/>
            <person name="Wanner B.L."/>
            <person name="Mori H."/>
            <person name="Horiuchi T."/>
        </authorList>
    </citation>
    <scope>NUCLEOTIDE SEQUENCE [LARGE SCALE GENOMIC DNA]</scope>
    <source>
        <strain>K12 / W3110 / ATCC 27325 / DSM 5911</strain>
    </source>
</reference>
<reference key="3">
    <citation type="journal article" date="1981" name="Nucleic Acids Res.">
        <title>The nucleotide sequence of the cloned rpoD gene for the RNA polymerase sigma subunit from E coli K12.</title>
        <authorList>
            <person name="Burton Z.F."/>
            <person name="Burgess R.R."/>
            <person name="Lin J."/>
            <person name="Moore D."/>
            <person name="Holder S."/>
            <person name="Gross C.A."/>
        </authorList>
    </citation>
    <scope>NUCLEOTIDE SEQUENCE [GENOMIC DNA] OF 118-168</scope>
    <source>
        <strain>K12</strain>
    </source>
</reference>
<reference key="4">
    <citation type="journal article" date="1995" name="Nucleic Acids Res.">
        <title>Detection of new genes in a bacterial genome using Markov models for three gene classes.</title>
        <authorList>
            <person name="Borodovsky M."/>
            <person name="McIninch J."/>
            <person name="Koonin E.V."/>
            <person name="Rudd K.E."/>
            <person name="Medigue C."/>
            <person name="Danchin A."/>
        </authorList>
    </citation>
    <scope>IDENTIFICATION</scope>
</reference>
<reference key="5">
    <citation type="journal article" date="1996" name="Nature">
        <title>A new class of uracil-DNA glycosylases related to human thymine-DNA glycosylase.</title>
        <authorList>
            <person name="Gallinari P."/>
            <person name="Jiricny J."/>
        </authorList>
    </citation>
    <scope>FUNCTION</scope>
</reference>
<reference key="6">
    <citation type="journal article" date="2001" name="Mol. Microbiol.">
        <title>Escherichia coli DNA glycosylase Mug: a growth-regulated enzyme required for mutation avoidance in stationary-phase cells.</title>
        <authorList>
            <person name="Mokkapati S.K."/>
            <person name="Fernandez de Henestrosa A.R."/>
            <person name="Bhagwat A.S."/>
        </authorList>
    </citation>
    <scope>INDUCTION</scope>
</reference>
<reference key="7">
    <citation type="journal article" date="2003" name="J. Biol. Chem.">
        <title>Mismatch uracil glycosylase from Escherichia coli: a general mismatch or a specific DNA glycosylase?</title>
        <authorList>
            <person name="O'Neill R.J."/>
            <person name="Vorob'eva O.V."/>
            <person name="Shahbakhti H."/>
            <person name="Zmuda E."/>
            <person name="Bhagwat A.S."/>
            <person name="Baldwin G.S."/>
        </authorList>
    </citation>
    <scope>FUNCTION</scope>
</reference>
<reference key="8">
    <citation type="journal article" date="1998" name="Cell">
        <title>Crystal structure of a G:T/U mismatch-specific DNA glycosylase: mismatch recognition by complementary-strand interactions.</title>
        <authorList>
            <person name="Barrett T.E."/>
            <person name="Savva R."/>
            <person name="Panayotou G."/>
            <person name="Brown T."/>
            <person name="Barlow T."/>
            <person name="Jiricny J."/>
            <person name="Pearl L.H."/>
        </authorList>
    </citation>
    <scope>X-RAY CRYSTALLOGRAPHY (1.8 ANGSTROMS) IN COMPLEX WITH DNA</scope>
</reference>
<reference key="9">
    <citation type="journal article" date="1998" name="Nat. Struct. Biol.">
        <title>Structure of a DNA base-excision product resembling a cisplatin inter-strand adduct.</title>
        <authorList>
            <person name="Barrett T.E."/>
            <person name="Savva R."/>
            <person name="Barlow T."/>
            <person name="Brown T."/>
            <person name="Jiricny J."/>
            <person name="Pearl L.H."/>
        </authorList>
    </citation>
    <scope>X-RAY CRYSTALLOGRAPHY (1.8 ANGSTROMS) IN COMPLEX WITH DNA</scope>
</reference>
<reference key="10">
    <citation type="journal article" date="1999" name="EMBO J.">
        <title>Crystal structure of a thwarted mismatch glycosylase DNA repair complex.</title>
        <authorList>
            <person name="Barrett T.E."/>
            <person name="Schaerer O.D."/>
            <person name="Savva R."/>
            <person name="Brown T."/>
            <person name="Jiricny J."/>
            <person name="Verdine G.L."/>
            <person name="Pearl L.H."/>
        </authorList>
    </citation>
    <scope>X-RAY CRYSTALLOGRAPHY (2.85 ANGSTROMS) IN COMPLEX WITH DNA</scope>
</reference>
<protein>
    <recommendedName>
        <fullName>G/U mismatch-specific DNA glycosylase</fullName>
        <ecNumber>3.2.2.28</ecNumber>
    </recommendedName>
    <alternativeName>
        <fullName>Double-strand-specific uracil glycosylase</fullName>
    </alternativeName>
    <alternativeName>
        <fullName>Mismatch-specific uracil DNA-glycosylase</fullName>
        <shortName>MUG</shortName>
    </alternativeName>
</protein>